<name>SELO_CORGB</name>
<evidence type="ECO:0000255" key="1">
    <source>
        <dbReference type="HAMAP-Rule" id="MF_00692"/>
    </source>
</evidence>
<comment type="function">
    <text evidence="1">Nucleotidyltransferase involved in the post-translational modification of proteins. It can catalyze the addition of adenosine monophosphate (AMP) or uridine monophosphate (UMP) to a protein, resulting in modifications known as AMPylation and UMPylation.</text>
</comment>
<comment type="catalytic activity">
    <reaction evidence="1">
        <text>L-seryl-[protein] + ATP = 3-O-(5'-adenylyl)-L-seryl-[protein] + diphosphate</text>
        <dbReference type="Rhea" id="RHEA:58120"/>
        <dbReference type="Rhea" id="RHEA-COMP:9863"/>
        <dbReference type="Rhea" id="RHEA-COMP:15073"/>
        <dbReference type="ChEBI" id="CHEBI:29999"/>
        <dbReference type="ChEBI" id="CHEBI:30616"/>
        <dbReference type="ChEBI" id="CHEBI:33019"/>
        <dbReference type="ChEBI" id="CHEBI:142516"/>
        <dbReference type="EC" id="2.7.7.108"/>
    </reaction>
</comment>
<comment type="catalytic activity">
    <reaction evidence="1">
        <text>L-threonyl-[protein] + ATP = 3-O-(5'-adenylyl)-L-threonyl-[protein] + diphosphate</text>
        <dbReference type="Rhea" id="RHEA:54292"/>
        <dbReference type="Rhea" id="RHEA-COMP:11060"/>
        <dbReference type="Rhea" id="RHEA-COMP:13847"/>
        <dbReference type="ChEBI" id="CHEBI:30013"/>
        <dbReference type="ChEBI" id="CHEBI:30616"/>
        <dbReference type="ChEBI" id="CHEBI:33019"/>
        <dbReference type="ChEBI" id="CHEBI:138113"/>
        <dbReference type="EC" id="2.7.7.108"/>
    </reaction>
</comment>
<comment type="catalytic activity">
    <reaction evidence="1">
        <text>L-tyrosyl-[protein] + ATP = O-(5'-adenylyl)-L-tyrosyl-[protein] + diphosphate</text>
        <dbReference type="Rhea" id="RHEA:54288"/>
        <dbReference type="Rhea" id="RHEA-COMP:10136"/>
        <dbReference type="Rhea" id="RHEA-COMP:13846"/>
        <dbReference type="ChEBI" id="CHEBI:30616"/>
        <dbReference type="ChEBI" id="CHEBI:33019"/>
        <dbReference type="ChEBI" id="CHEBI:46858"/>
        <dbReference type="ChEBI" id="CHEBI:83624"/>
        <dbReference type="EC" id="2.7.7.108"/>
    </reaction>
</comment>
<comment type="catalytic activity">
    <reaction evidence="1">
        <text>L-histidyl-[protein] + UTP = N(tele)-(5'-uridylyl)-L-histidyl-[protein] + diphosphate</text>
        <dbReference type="Rhea" id="RHEA:83891"/>
        <dbReference type="Rhea" id="RHEA-COMP:9745"/>
        <dbReference type="Rhea" id="RHEA-COMP:20239"/>
        <dbReference type="ChEBI" id="CHEBI:29979"/>
        <dbReference type="ChEBI" id="CHEBI:33019"/>
        <dbReference type="ChEBI" id="CHEBI:46398"/>
        <dbReference type="ChEBI" id="CHEBI:233474"/>
    </reaction>
</comment>
<comment type="catalytic activity">
    <reaction evidence="1">
        <text>L-seryl-[protein] + UTP = O-(5'-uridylyl)-L-seryl-[protein] + diphosphate</text>
        <dbReference type="Rhea" id="RHEA:64604"/>
        <dbReference type="Rhea" id="RHEA-COMP:9863"/>
        <dbReference type="Rhea" id="RHEA-COMP:16635"/>
        <dbReference type="ChEBI" id="CHEBI:29999"/>
        <dbReference type="ChEBI" id="CHEBI:33019"/>
        <dbReference type="ChEBI" id="CHEBI:46398"/>
        <dbReference type="ChEBI" id="CHEBI:156051"/>
    </reaction>
</comment>
<comment type="catalytic activity">
    <reaction evidence="1">
        <text>L-tyrosyl-[protein] + UTP = O-(5'-uridylyl)-L-tyrosyl-[protein] + diphosphate</text>
        <dbReference type="Rhea" id="RHEA:83887"/>
        <dbReference type="Rhea" id="RHEA-COMP:10136"/>
        <dbReference type="Rhea" id="RHEA-COMP:20238"/>
        <dbReference type="ChEBI" id="CHEBI:33019"/>
        <dbReference type="ChEBI" id="CHEBI:46398"/>
        <dbReference type="ChEBI" id="CHEBI:46858"/>
        <dbReference type="ChEBI" id="CHEBI:90602"/>
    </reaction>
</comment>
<comment type="cofactor">
    <cofactor evidence="1">
        <name>Mg(2+)</name>
        <dbReference type="ChEBI" id="CHEBI:18420"/>
    </cofactor>
    <cofactor evidence="1">
        <name>Mn(2+)</name>
        <dbReference type="ChEBI" id="CHEBI:29035"/>
    </cofactor>
</comment>
<comment type="similarity">
    <text evidence="1">Belongs to the SELO family.</text>
</comment>
<sequence>MNTAPFKLEADFASALPTMAAPWQGEESPNPELVILNDDLAYSLGLDPTWLRTPEGVQFLLGRNPEPLTKAVAQAYSGHQFGQFVASLGDGRALLLGEARSADGVLHDIHLKGSGRTQFSRGADGRAVLGPVLREYIISEAMHALGVPTTRSLAVISTGRKIQRGSVAPGAVLVRVATSLIRVGSFQYSNISGGIELSQHLANYTITRHFPSLVAELSAPTPATYVSLFKAILQRQADTVGKWTRLGFVHGALNTDNTLISGETVDYGPCAFMERYRGDAKFSSIDTYGRYKFENQPMILGWNMARLVETLLPLLGATPDEGMTAAQEALGEFDDLCEQAIRKEFATALGLDESDTGTVEQFRELLYLHNPDITTLLRSLTDNTAPPSGFEAFVHDWKTQDPDFEAMQAVNPLFIPRNHLVEAALADAIVGNLEKFHELLAAVTNPFDPTAGPDELRLPSEEGFEEDYMTFCGT</sequence>
<accession>A4QF06</accession>
<proteinExistence type="inferred from homology"/>
<organism>
    <name type="scientific">Corynebacterium glutamicum (strain R)</name>
    <dbReference type="NCBI Taxonomy" id="340322"/>
    <lineage>
        <taxon>Bacteria</taxon>
        <taxon>Bacillati</taxon>
        <taxon>Actinomycetota</taxon>
        <taxon>Actinomycetes</taxon>
        <taxon>Mycobacteriales</taxon>
        <taxon>Corynebacteriaceae</taxon>
        <taxon>Corynebacterium</taxon>
    </lineage>
</organism>
<feature type="chain" id="PRO_1000045246" description="Protein nucleotidyltransferase YdiU">
    <location>
        <begin position="1"/>
        <end position="474"/>
    </location>
</feature>
<feature type="active site" description="Proton acceptor" evidence="1">
    <location>
        <position position="256"/>
    </location>
</feature>
<feature type="binding site" evidence="1">
    <location>
        <position position="89"/>
    </location>
    <ligand>
        <name>ATP</name>
        <dbReference type="ChEBI" id="CHEBI:30616"/>
    </ligand>
</feature>
<feature type="binding site" evidence="1">
    <location>
        <position position="91"/>
    </location>
    <ligand>
        <name>ATP</name>
        <dbReference type="ChEBI" id="CHEBI:30616"/>
    </ligand>
</feature>
<feature type="binding site" evidence="1">
    <location>
        <position position="92"/>
    </location>
    <ligand>
        <name>ATP</name>
        <dbReference type="ChEBI" id="CHEBI:30616"/>
    </ligand>
</feature>
<feature type="binding site" evidence="1">
    <location>
        <position position="112"/>
    </location>
    <ligand>
        <name>ATP</name>
        <dbReference type="ChEBI" id="CHEBI:30616"/>
    </ligand>
</feature>
<feature type="binding site" evidence="1">
    <location>
        <position position="124"/>
    </location>
    <ligand>
        <name>ATP</name>
        <dbReference type="ChEBI" id="CHEBI:30616"/>
    </ligand>
</feature>
<feature type="binding site" evidence="1">
    <location>
        <position position="125"/>
    </location>
    <ligand>
        <name>ATP</name>
        <dbReference type="ChEBI" id="CHEBI:30616"/>
    </ligand>
</feature>
<feature type="binding site" evidence="1">
    <location>
        <position position="175"/>
    </location>
    <ligand>
        <name>ATP</name>
        <dbReference type="ChEBI" id="CHEBI:30616"/>
    </ligand>
</feature>
<feature type="binding site" evidence="1">
    <location>
        <position position="182"/>
    </location>
    <ligand>
        <name>ATP</name>
        <dbReference type="ChEBI" id="CHEBI:30616"/>
    </ligand>
</feature>
<feature type="binding site" evidence="1">
    <location>
        <position position="257"/>
    </location>
    <ligand>
        <name>Mg(2+)</name>
        <dbReference type="ChEBI" id="CHEBI:18420"/>
    </ligand>
</feature>
<feature type="binding site" evidence="1">
    <location>
        <position position="266"/>
    </location>
    <ligand>
        <name>ATP</name>
        <dbReference type="ChEBI" id="CHEBI:30616"/>
    </ligand>
</feature>
<feature type="binding site" evidence="1">
    <location>
        <position position="266"/>
    </location>
    <ligand>
        <name>Mg(2+)</name>
        <dbReference type="ChEBI" id="CHEBI:18420"/>
    </ligand>
</feature>
<keyword id="KW-0067">ATP-binding</keyword>
<keyword id="KW-0460">Magnesium</keyword>
<keyword id="KW-0464">Manganese</keyword>
<keyword id="KW-0479">Metal-binding</keyword>
<keyword id="KW-0547">Nucleotide-binding</keyword>
<keyword id="KW-0548">Nucleotidyltransferase</keyword>
<keyword id="KW-0808">Transferase</keyword>
<dbReference type="EC" id="2.7.7.-" evidence="1"/>
<dbReference type="EC" id="2.7.7.108" evidence="1"/>
<dbReference type="EMBL" id="AP009044">
    <property type="protein sequence ID" value="BAF54822.1"/>
    <property type="molecule type" value="Genomic_DNA"/>
</dbReference>
<dbReference type="RefSeq" id="WP_011897408.1">
    <property type="nucleotide sequence ID" value="NC_009342.1"/>
</dbReference>
<dbReference type="SMR" id="A4QF06"/>
<dbReference type="KEGG" id="cgt:cgR_1828"/>
<dbReference type="HOGENOM" id="CLU_010245_4_1_11"/>
<dbReference type="PhylomeDB" id="A4QF06"/>
<dbReference type="Proteomes" id="UP000006698">
    <property type="component" value="Chromosome"/>
</dbReference>
<dbReference type="GO" id="GO:0070733">
    <property type="term" value="F:AMPylase activity"/>
    <property type="evidence" value="ECO:0007669"/>
    <property type="project" value="TreeGrafter"/>
</dbReference>
<dbReference type="GO" id="GO:0005524">
    <property type="term" value="F:ATP binding"/>
    <property type="evidence" value="ECO:0007669"/>
    <property type="project" value="UniProtKB-UniRule"/>
</dbReference>
<dbReference type="GO" id="GO:0000287">
    <property type="term" value="F:magnesium ion binding"/>
    <property type="evidence" value="ECO:0007669"/>
    <property type="project" value="UniProtKB-UniRule"/>
</dbReference>
<dbReference type="HAMAP" id="MF_00692">
    <property type="entry name" value="YdiU_SelO"/>
    <property type="match status" value="1"/>
</dbReference>
<dbReference type="InterPro" id="IPR003846">
    <property type="entry name" value="SelO"/>
</dbReference>
<dbReference type="PANTHER" id="PTHR32057">
    <property type="entry name" value="PROTEIN ADENYLYLTRANSFERASE SELO, MITOCHONDRIAL"/>
    <property type="match status" value="1"/>
</dbReference>
<dbReference type="PANTHER" id="PTHR32057:SF14">
    <property type="entry name" value="PROTEIN ADENYLYLTRANSFERASE SELO, MITOCHONDRIAL"/>
    <property type="match status" value="1"/>
</dbReference>
<dbReference type="Pfam" id="PF02696">
    <property type="entry name" value="SelO"/>
    <property type="match status" value="1"/>
</dbReference>
<reference key="1">
    <citation type="journal article" date="2007" name="Microbiology">
        <title>Comparative analysis of the Corynebacterium glutamicum group and complete genome sequence of strain R.</title>
        <authorList>
            <person name="Yukawa H."/>
            <person name="Omumasaba C.A."/>
            <person name="Nonaka H."/>
            <person name="Kos P."/>
            <person name="Okai N."/>
            <person name="Suzuki N."/>
            <person name="Suda M."/>
            <person name="Tsuge Y."/>
            <person name="Watanabe J."/>
            <person name="Ikeda Y."/>
            <person name="Vertes A.A."/>
            <person name="Inui M."/>
        </authorList>
    </citation>
    <scope>NUCLEOTIDE SEQUENCE [LARGE SCALE GENOMIC DNA]</scope>
    <source>
        <strain>R</strain>
    </source>
</reference>
<gene>
    <name evidence="1" type="primary">ydiU</name>
    <name evidence="1" type="synonym">selO</name>
    <name type="ordered locus">cgR_1828</name>
</gene>
<protein>
    <recommendedName>
        <fullName evidence="1">Protein nucleotidyltransferase YdiU</fullName>
        <ecNumber evidence="1">2.7.7.-</ecNumber>
    </recommendedName>
    <alternativeName>
        <fullName evidence="1">Protein adenylyltransferase YdiU</fullName>
        <ecNumber evidence="1">2.7.7.108</ecNumber>
    </alternativeName>
    <alternativeName>
        <fullName evidence="1">Protein uridylyltransferase YdiU</fullName>
        <ecNumber evidence="1">2.7.7.-</ecNumber>
    </alternativeName>
</protein>